<sequence>MDFSQLGGLLDGMKKEFSQLEEKNKDTIHTSKSGGGMVSVSFNGMGELVDLQIDDSLLEDKEAMQIYLMSALNDGYKAVEENRKNLAFNMLGNFAKL</sequence>
<reference key="1">
    <citation type="submission" date="2008-10" db="EMBL/GenBank/DDBJ databases">
        <title>The complete genome sequence of Helicobacter pylori strain P12.</title>
        <authorList>
            <person name="Fischer W."/>
            <person name="Windhager L."/>
            <person name="Karnholz A."/>
            <person name="Zeiller M."/>
            <person name="Zimmer R."/>
            <person name="Haas R."/>
        </authorList>
    </citation>
    <scope>NUCLEOTIDE SEQUENCE [LARGE SCALE GENOMIC DNA]</scope>
    <source>
        <strain>P12</strain>
    </source>
</reference>
<keyword id="KW-0963">Cytoplasm</keyword>
<keyword id="KW-0238">DNA-binding</keyword>
<dbReference type="EMBL" id="CP001217">
    <property type="protein sequence ID" value="ACJ07191.1"/>
    <property type="molecule type" value="Genomic_DNA"/>
</dbReference>
<dbReference type="SMR" id="B6JPD0"/>
<dbReference type="KEGG" id="hpp:HPP12_0031"/>
<dbReference type="HOGENOM" id="CLU_140930_2_1_7"/>
<dbReference type="Proteomes" id="UP000008198">
    <property type="component" value="Chromosome"/>
</dbReference>
<dbReference type="GO" id="GO:0043590">
    <property type="term" value="C:bacterial nucleoid"/>
    <property type="evidence" value="ECO:0007669"/>
    <property type="project" value="UniProtKB-UniRule"/>
</dbReference>
<dbReference type="GO" id="GO:0005737">
    <property type="term" value="C:cytoplasm"/>
    <property type="evidence" value="ECO:0007669"/>
    <property type="project" value="UniProtKB-UniRule"/>
</dbReference>
<dbReference type="GO" id="GO:0003677">
    <property type="term" value="F:DNA binding"/>
    <property type="evidence" value="ECO:0007669"/>
    <property type="project" value="UniProtKB-UniRule"/>
</dbReference>
<dbReference type="Gene3D" id="3.30.1310.10">
    <property type="entry name" value="Nucleoid-associated protein YbaB-like domain"/>
    <property type="match status" value="1"/>
</dbReference>
<dbReference type="HAMAP" id="MF_00274">
    <property type="entry name" value="DNA_YbaB_EbfC"/>
    <property type="match status" value="1"/>
</dbReference>
<dbReference type="InterPro" id="IPR036894">
    <property type="entry name" value="YbaB-like_sf"/>
</dbReference>
<dbReference type="InterPro" id="IPR004401">
    <property type="entry name" value="YbaB/EbfC"/>
</dbReference>
<dbReference type="NCBIfam" id="TIGR00103">
    <property type="entry name" value="DNA_YbaB_EbfC"/>
    <property type="match status" value="1"/>
</dbReference>
<dbReference type="Pfam" id="PF02575">
    <property type="entry name" value="YbaB_DNA_bd"/>
    <property type="match status" value="1"/>
</dbReference>
<dbReference type="PIRSF" id="PIRSF004555">
    <property type="entry name" value="UCP004555"/>
    <property type="match status" value="1"/>
</dbReference>
<dbReference type="SUPFAM" id="SSF82607">
    <property type="entry name" value="YbaB-like"/>
    <property type="match status" value="1"/>
</dbReference>
<proteinExistence type="inferred from homology"/>
<name>Y031_HELP2</name>
<evidence type="ECO:0000255" key="1">
    <source>
        <dbReference type="HAMAP-Rule" id="MF_00274"/>
    </source>
</evidence>
<organism>
    <name type="scientific">Helicobacter pylori (strain P12)</name>
    <dbReference type="NCBI Taxonomy" id="570508"/>
    <lineage>
        <taxon>Bacteria</taxon>
        <taxon>Pseudomonadati</taxon>
        <taxon>Campylobacterota</taxon>
        <taxon>Epsilonproteobacteria</taxon>
        <taxon>Campylobacterales</taxon>
        <taxon>Helicobacteraceae</taxon>
        <taxon>Helicobacter</taxon>
    </lineage>
</organism>
<gene>
    <name type="ordered locus">HPP12_0031</name>
</gene>
<accession>B6JPD0</accession>
<protein>
    <recommendedName>
        <fullName evidence="1">Nucleoid-associated protein HPP12_0031</fullName>
    </recommendedName>
</protein>
<feature type="chain" id="PRO_1000114615" description="Nucleoid-associated protein HPP12_0031">
    <location>
        <begin position="1"/>
        <end position="97"/>
    </location>
</feature>
<comment type="function">
    <text evidence="1">Binds to DNA and alters its conformation. May be involved in regulation of gene expression, nucleoid organization and DNA protection.</text>
</comment>
<comment type="subunit">
    <text evidence="1">Homodimer.</text>
</comment>
<comment type="subcellular location">
    <subcellularLocation>
        <location evidence="1">Cytoplasm</location>
        <location evidence="1">Nucleoid</location>
    </subcellularLocation>
</comment>
<comment type="similarity">
    <text evidence="1">Belongs to the YbaB/EbfC family.</text>
</comment>